<name>ZAPD_BURO0</name>
<feature type="chain" id="PRO_1000136929" description="Cell division protein ZapD">
    <location>
        <begin position="1"/>
        <end position="251"/>
    </location>
</feature>
<evidence type="ECO:0000255" key="1">
    <source>
        <dbReference type="HAMAP-Rule" id="MF_01092"/>
    </source>
</evidence>
<proteinExistence type="inferred from homology"/>
<protein>
    <recommendedName>
        <fullName evidence="1">Cell division protein ZapD</fullName>
    </recommendedName>
    <alternativeName>
        <fullName evidence="1">Z ring-associated protein D</fullName>
    </alternativeName>
</protein>
<gene>
    <name evidence="1" type="primary">zapD</name>
    <name type="ordered locus">Bcenmc03_0544</name>
</gene>
<comment type="function">
    <text evidence="1">Cell division factor that enhances FtsZ-ring assembly. Directly interacts with FtsZ and promotes bundling of FtsZ protofilaments, with a reduction in FtsZ GTPase activity.</text>
</comment>
<comment type="subunit">
    <text evidence="1">Interacts with FtsZ.</text>
</comment>
<comment type="subcellular location">
    <subcellularLocation>
        <location evidence="1">Cytoplasm</location>
    </subcellularLocation>
    <text evidence="1">Localizes to mid-cell in an FtsZ-dependent manner.</text>
</comment>
<comment type="similarity">
    <text evidence="1">Belongs to the ZapD family.</text>
</comment>
<sequence length="251" mass="28916">MILYEYPFNERIRTLLRLEDLFERFAFFLAQEDPREHHVALTTLFEIAEVTGRADLKSDLMKELERQRQTLAPFRGNPGIEQNALEAVLGEIEQTLANLAQMQGKTGQHLVDNEWLASIRSRAVIPGGTCKFDLPSYYAWQQWPAEQRRQDIAKWILPMLPLRDAAAIVLRLARESGQASKVMAMQGSYQQMLSGRSYQLMQVRVPPELRVIPEASANKYMLWVRFTMQDGDVRPRAVDIDVPFHLTLCNL</sequence>
<organism>
    <name type="scientific">Burkholderia orbicola (strain MC0-3)</name>
    <dbReference type="NCBI Taxonomy" id="406425"/>
    <lineage>
        <taxon>Bacteria</taxon>
        <taxon>Pseudomonadati</taxon>
        <taxon>Pseudomonadota</taxon>
        <taxon>Betaproteobacteria</taxon>
        <taxon>Burkholderiales</taxon>
        <taxon>Burkholderiaceae</taxon>
        <taxon>Burkholderia</taxon>
        <taxon>Burkholderia cepacia complex</taxon>
        <taxon>Burkholderia orbicola</taxon>
    </lineage>
</organism>
<keyword id="KW-0131">Cell cycle</keyword>
<keyword id="KW-0132">Cell division</keyword>
<keyword id="KW-0963">Cytoplasm</keyword>
<keyword id="KW-0717">Septation</keyword>
<reference key="1">
    <citation type="submission" date="2008-02" db="EMBL/GenBank/DDBJ databases">
        <title>Complete sequence of chromosome 1 of Burkholderia cenocepacia MC0-3.</title>
        <authorList>
            <person name="Copeland A."/>
            <person name="Lucas S."/>
            <person name="Lapidus A."/>
            <person name="Barry K."/>
            <person name="Bruce D."/>
            <person name="Goodwin L."/>
            <person name="Glavina del Rio T."/>
            <person name="Dalin E."/>
            <person name="Tice H."/>
            <person name="Pitluck S."/>
            <person name="Chain P."/>
            <person name="Malfatti S."/>
            <person name="Shin M."/>
            <person name="Vergez L."/>
            <person name="Schmutz J."/>
            <person name="Larimer F."/>
            <person name="Land M."/>
            <person name="Hauser L."/>
            <person name="Kyrpides N."/>
            <person name="Mikhailova N."/>
            <person name="Tiedje J."/>
            <person name="Richardson P."/>
        </authorList>
    </citation>
    <scope>NUCLEOTIDE SEQUENCE [LARGE SCALE GENOMIC DNA]</scope>
    <source>
        <strain>MC0-3</strain>
    </source>
</reference>
<accession>B1JV92</accession>
<dbReference type="EMBL" id="CP000958">
    <property type="protein sequence ID" value="ACA89722.1"/>
    <property type="molecule type" value="Genomic_DNA"/>
</dbReference>
<dbReference type="RefSeq" id="WP_012327858.1">
    <property type="nucleotide sequence ID" value="NC_010508.1"/>
</dbReference>
<dbReference type="SMR" id="B1JV92"/>
<dbReference type="GeneID" id="83047345"/>
<dbReference type="KEGG" id="bcm:Bcenmc03_0544"/>
<dbReference type="HOGENOM" id="CLU_076303_0_1_4"/>
<dbReference type="Proteomes" id="UP000002169">
    <property type="component" value="Chromosome 1"/>
</dbReference>
<dbReference type="GO" id="GO:0032153">
    <property type="term" value="C:cell division site"/>
    <property type="evidence" value="ECO:0007669"/>
    <property type="project" value="TreeGrafter"/>
</dbReference>
<dbReference type="GO" id="GO:0005737">
    <property type="term" value="C:cytoplasm"/>
    <property type="evidence" value="ECO:0007669"/>
    <property type="project" value="UniProtKB-SubCell"/>
</dbReference>
<dbReference type="GO" id="GO:0000917">
    <property type="term" value="P:division septum assembly"/>
    <property type="evidence" value="ECO:0007669"/>
    <property type="project" value="UniProtKB-KW"/>
</dbReference>
<dbReference type="GO" id="GO:0043093">
    <property type="term" value="P:FtsZ-dependent cytokinesis"/>
    <property type="evidence" value="ECO:0007669"/>
    <property type="project" value="UniProtKB-UniRule"/>
</dbReference>
<dbReference type="Gene3D" id="1.10.3900.10">
    <property type="entry name" value="YacF-like"/>
    <property type="match status" value="1"/>
</dbReference>
<dbReference type="Gene3D" id="2.60.440.10">
    <property type="entry name" value="YacF-like domains"/>
    <property type="match status" value="1"/>
</dbReference>
<dbReference type="HAMAP" id="MF_01092">
    <property type="entry name" value="ZapD"/>
    <property type="match status" value="1"/>
</dbReference>
<dbReference type="InterPro" id="IPR009777">
    <property type="entry name" value="ZapD"/>
</dbReference>
<dbReference type="InterPro" id="IPR027462">
    <property type="entry name" value="ZapD_C"/>
</dbReference>
<dbReference type="InterPro" id="IPR036268">
    <property type="entry name" value="ZapD_sf"/>
</dbReference>
<dbReference type="NCBIfam" id="NF003656">
    <property type="entry name" value="PRK05287.1-4"/>
    <property type="match status" value="1"/>
</dbReference>
<dbReference type="PANTHER" id="PTHR39455">
    <property type="entry name" value="CELL DIVISION PROTEIN ZAPD"/>
    <property type="match status" value="1"/>
</dbReference>
<dbReference type="PANTHER" id="PTHR39455:SF1">
    <property type="entry name" value="CELL DIVISION PROTEIN ZAPD"/>
    <property type="match status" value="1"/>
</dbReference>
<dbReference type="Pfam" id="PF07072">
    <property type="entry name" value="ZapD"/>
    <property type="match status" value="1"/>
</dbReference>
<dbReference type="SUPFAM" id="SSF160950">
    <property type="entry name" value="YacF-like"/>
    <property type="match status" value="1"/>
</dbReference>